<protein>
    <recommendedName>
        <fullName evidence="3">Large ribosomal subunit protein eL29</fullName>
    </recommendedName>
    <alternativeName>
        <fullName>60S ribosomal protein L29</fullName>
    </alternativeName>
</protein>
<sequence length="160" mass="17498">MAKSKNHTTHNQSRKWHRNGIKKPRSQRYESLKGVDPKFLRNMRFAKKHNKKGLKKMQANNAKAMSARAEAIKALVKPKEVKPNIPKGGSRKLSRLAYIAHPKLGKRARARIAKGLRFCRPKSQAKAQSKAKATAGGTAAAPVPPASAPKGAQAPTKAPQ</sequence>
<gene>
    <name type="primary">RPL29</name>
</gene>
<accession>Q95281</accession>
<accession>Q9XS36</accession>
<reference key="1">
    <citation type="submission" date="1998-08" db="EMBL/GenBank/DDBJ databases">
        <title>Porcine cosmid clone containing the ACY-1 and rpL29/HIP genes.</title>
        <authorList>
            <person name="Sawazaki T."/>
            <person name="Hamasima N."/>
        </authorList>
    </citation>
    <scope>NUCLEOTIDE SEQUENCE</scope>
    <source>
        <tissue>Kidney</tissue>
    </source>
</reference>
<reference key="2">
    <citation type="journal article" date="1996" name="Mamm. Genome">
        <title>Evaluation and characterization of a porcine small intestine cDNA library: analysis of 839 clones.</title>
        <authorList>
            <person name="Winteroe A.K."/>
            <person name="Fredholm M."/>
            <person name="Davies W."/>
        </authorList>
    </citation>
    <scope>NUCLEOTIDE SEQUENCE [LARGE SCALE MRNA] OF 1-93</scope>
    <source>
        <tissue>Small intestine</tissue>
    </source>
</reference>
<dbReference type="EMBL" id="AB017196">
    <property type="protein sequence ID" value="BAA76404.1"/>
    <property type="molecule type" value="Genomic_DNA"/>
</dbReference>
<dbReference type="EMBL" id="AB016798">
    <property type="protein sequence ID" value="BAA76401.1"/>
    <property type="molecule type" value="mRNA"/>
</dbReference>
<dbReference type="EMBL" id="Z81215">
    <property type="protein sequence ID" value="CAB03570.1"/>
    <property type="molecule type" value="mRNA"/>
</dbReference>
<dbReference type="RefSeq" id="NP_999115.1">
    <property type="nucleotide sequence ID" value="NM_213950.1"/>
</dbReference>
<dbReference type="RefSeq" id="XP_005669619.1">
    <property type="nucleotide sequence ID" value="XM_005669562.3"/>
</dbReference>
<dbReference type="PDB" id="3J7O">
    <property type="method" value="EM"/>
    <property type="resolution" value="3.40 A"/>
    <property type="chains" value="b=1-160"/>
</dbReference>
<dbReference type="PDB" id="3J7P">
    <property type="method" value="EM"/>
    <property type="resolution" value="3.50 A"/>
    <property type="chains" value="b=1-160"/>
</dbReference>
<dbReference type="PDB" id="3J7Q">
    <property type="method" value="EM"/>
    <property type="resolution" value="3.40 A"/>
    <property type="chains" value="b=1-160"/>
</dbReference>
<dbReference type="PDB" id="3J7R">
    <property type="method" value="EM"/>
    <property type="resolution" value="3.90 A"/>
    <property type="chains" value="b=1-160"/>
</dbReference>
<dbReference type="PDBsum" id="3J7O"/>
<dbReference type="PDBsum" id="3J7P"/>
<dbReference type="PDBsum" id="3J7Q"/>
<dbReference type="PDBsum" id="3J7R"/>
<dbReference type="SMR" id="Q95281"/>
<dbReference type="FunCoup" id="Q95281">
    <property type="interactions" value="348"/>
</dbReference>
<dbReference type="STRING" id="9823.ENSSSCP00000045632"/>
<dbReference type="PaxDb" id="9823-ENSSSCP00000023834"/>
<dbReference type="PeptideAtlas" id="Q95281"/>
<dbReference type="Ensembl" id="ENSSSCT00000027316.4">
    <property type="protein sequence ID" value="ENSSSCP00000023834.1"/>
    <property type="gene ID" value="ENSSSCG00000027573.4"/>
</dbReference>
<dbReference type="Ensembl" id="ENSSSCT00015089579.1">
    <property type="protein sequence ID" value="ENSSSCP00015036560.1"/>
    <property type="gene ID" value="ENSSSCG00015066896.1"/>
</dbReference>
<dbReference type="Ensembl" id="ENSSSCT00030044123.1">
    <property type="protein sequence ID" value="ENSSSCP00030019890.1"/>
    <property type="gene ID" value="ENSSSCG00030031840.1"/>
</dbReference>
<dbReference type="Ensembl" id="ENSSSCT00035105330.1">
    <property type="protein sequence ID" value="ENSSSCP00035045219.1"/>
    <property type="gene ID" value="ENSSSCG00035077259.1"/>
</dbReference>
<dbReference type="Ensembl" id="ENSSSCT00040044457.1">
    <property type="protein sequence ID" value="ENSSSCP00040018691.1"/>
    <property type="gene ID" value="ENSSSCG00040032824.1"/>
</dbReference>
<dbReference type="Ensembl" id="ENSSSCT00045006207.1">
    <property type="protein sequence ID" value="ENSSSCP00045004201.1"/>
    <property type="gene ID" value="ENSSSCG00045003743.1"/>
</dbReference>
<dbReference type="Ensembl" id="ENSSSCT00050045105.1">
    <property type="protein sequence ID" value="ENSSSCP00050018536.1"/>
    <property type="gene ID" value="ENSSSCG00050033653.1"/>
</dbReference>
<dbReference type="Ensembl" id="ENSSSCT00060033500.1">
    <property type="protein sequence ID" value="ENSSSCP00060014348.1"/>
    <property type="gene ID" value="ENSSSCG00060024700.1"/>
</dbReference>
<dbReference type="Ensembl" id="ENSSSCT00065033926.1">
    <property type="protein sequence ID" value="ENSSSCP00065014049.1"/>
    <property type="gene ID" value="ENSSSCG00065025349.1"/>
</dbReference>
<dbReference type="Ensembl" id="ENSSSCT00070051288.1">
    <property type="protein sequence ID" value="ENSSSCP00070043378.1"/>
    <property type="gene ID" value="ENSSSCG00070025656.1"/>
</dbReference>
<dbReference type="Ensembl" id="ENSSSCT00115032059">
    <property type="protein sequence ID" value="ENSSSCP00115030479"/>
    <property type="gene ID" value="ENSSSCG00115018100"/>
</dbReference>
<dbReference type="GeneID" id="396993"/>
<dbReference type="KEGG" id="ssc:396993"/>
<dbReference type="CTD" id="6159"/>
<dbReference type="VGNC" id="VGNC:104048">
    <property type="gene designation" value="RPL29"/>
</dbReference>
<dbReference type="eggNOG" id="KOG3504">
    <property type="taxonomic scope" value="Eukaryota"/>
</dbReference>
<dbReference type="GeneTree" id="ENSGT00390000007084"/>
<dbReference type="HOGENOM" id="CLU_139508_0_0_1"/>
<dbReference type="InParanoid" id="Q95281"/>
<dbReference type="OMA" id="LISGHHY"/>
<dbReference type="OrthoDB" id="996720at2759"/>
<dbReference type="TreeFam" id="TF313858"/>
<dbReference type="Reactome" id="R-SSC-156827">
    <property type="pathway name" value="L13a-mediated translational silencing of Ceruloplasmin expression"/>
</dbReference>
<dbReference type="Reactome" id="R-SSC-1799339">
    <property type="pathway name" value="SRP-dependent cotranslational protein targeting to membrane"/>
</dbReference>
<dbReference type="Reactome" id="R-SSC-6791226">
    <property type="pathway name" value="Major pathway of rRNA processing in the nucleolus and cytosol"/>
</dbReference>
<dbReference type="Reactome" id="R-SSC-72689">
    <property type="pathway name" value="Formation of a pool of free 40S subunits"/>
</dbReference>
<dbReference type="Reactome" id="R-SSC-72706">
    <property type="pathway name" value="GTP hydrolysis and joining of the 60S ribosomal subunit"/>
</dbReference>
<dbReference type="Reactome" id="R-SSC-975956">
    <property type="pathway name" value="Nonsense Mediated Decay (NMD) independent of the Exon Junction Complex (EJC)"/>
</dbReference>
<dbReference type="Reactome" id="R-SSC-975957">
    <property type="pathway name" value="Nonsense Mediated Decay (NMD) enhanced by the Exon Junction Complex (EJC)"/>
</dbReference>
<dbReference type="Proteomes" id="UP000008227">
    <property type="component" value="Chromosome 13"/>
</dbReference>
<dbReference type="Proteomes" id="UP000314985">
    <property type="component" value="Chromosome 13"/>
</dbReference>
<dbReference type="Proteomes" id="UP000694570">
    <property type="component" value="Unplaced"/>
</dbReference>
<dbReference type="Proteomes" id="UP000694571">
    <property type="component" value="Unplaced"/>
</dbReference>
<dbReference type="Proteomes" id="UP000694720">
    <property type="component" value="Unplaced"/>
</dbReference>
<dbReference type="Proteomes" id="UP000694722">
    <property type="component" value="Unplaced"/>
</dbReference>
<dbReference type="Proteomes" id="UP000694723">
    <property type="component" value="Unplaced"/>
</dbReference>
<dbReference type="Proteomes" id="UP000694724">
    <property type="component" value="Unplaced"/>
</dbReference>
<dbReference type="Proteomes" id="UP000694725">
    <property type="component" value="Unplaced"/>
</dbReference>
<dbReference type="Proteomes" id="UP000694726">
    <property type="component" value="Unplaced"/>
</dbReference>
<dbReference type="Proteomes" id="UP000694727">
    <property type="component" value="Unplaced"/>
</dbReference>
<dbReference type="Proteomes" id="UP000694728">
    <property type="component" value="Unplaced"/>
</dbReference>
<dbReference type="Bgee" id="ENSSSCG00000027573">
    <property type="expression patterns" value="Expressed in granulosa cell and 42 other cell types or tissues"/>
</dbReference>
<dbReference type="ExpressionAtlas" id="Q95281">
    <property type="expression patterns" value="baseline and differential"/>
</dbReference>
<dbReference type="GO" id="GO:0098556">
    <property type="term" value="C:cytoplasmic side of rough endoplasmic reticulum membrane"/>
    <property type="evidence" value="ECO:0000314"/>
    <property type="project" value="UniProtKB"/>
</dbReference>
<dbReference type="GO" id="GO:0022625">
    <property type="term" value="C:cytosolic large ribosomal subunit"/>
    <property type="evidence" value="ECO:0000318"/>
    <property type="project" value="GO_Central"/>
</dbReference>
<dbReference type="GO" id="GO:0015934">
    <property type="term" value="C:large ribosomal subunit"/>
    <property type="evidence" value="ECO:0000314"/>
    <property type="project" value="UniProtKB"/>
</dbReference>
<dbReference type="GO" id="GO:0003735">
    <property type="term" value="F:structural constituent of ribosome"/>
    <property type="evidence" value="ECO:0000318"/>
    <property type="project" value="GO_Central"/>
</dbReference>
<dbReference type="GO" id="GO:0002181">
    <property type="term" value="P:cytoplasmic translation"/>
    <property type="evidence" value="ECO:0000318"/>
    <property type="project" value="GO_Central"/>
</dbReference>
<dbReference type="Gene3D" id="6.10.140.1730">
    <property type="match status" value="1"/>
</dbReference>
<dbReference type="InterPro" id="IPR002673">
    <property type="entry name" value="Ribosomal_eL29"/>
</dbReference>
<dbReference type="PANTHER" id="PTHR12884">
    <property type="entry name" value="60S RIBOSOMAL PROTEIN L29"/>
    <property type="match status" value="1"/>
</dbReference>
<dbReference type="PANTHER" id="PTHR12884:SF18">
    <property type="entry name" value="60S RIBOSOMAL PROTEIN L29"/>
    <property type="match status" value="1"/>
</dbReference>
<dbReference type="Pfam" id="PF01779">
    <property type="entry name" value="Ribosomal_L29e"/>
    <property type="match status" value="1"/>
</dbReference>
<organism>
    <name type="scientific">Sus scrofa</name>
    <name type="common">Pig</name>
    <dbReference type="NCBI Taxonomy" id="9823"/>
    <lineage>
        <taxon>Eukaryota</taxon>
        <taxon>Metazoa</taxon>
        <taxon>Chordata</taxon>
        <taxon>Craniata</taxon>
        <taxon>Vertebrata</taxon>
        <taxon>Euteleostomi</taxon>
        <taxon>Mammalia</taxon>
        <taxon>Eutheria</taxon>
        <taxon>Laurasiatheria</taxon>
        <taxon>Artiodactyla</taxon>
        <taxon>Suina</taxon>
        <taxon>Suidae</taxon>
        <taxon>Sus</taxon>
    </lineage>
</organism>
<comment type="function">
    <text evidence="1">Component of the large ribosomal subunit. The ribosome is a large ribonucleoprotein complex responsible for the synthesis of proteins in the cell.</text>
</comment>
<comment type="subunit">
    <text evidence="1">Component of the large ribosomal subunit.</text>
</comment>
<comment type="subcellular location">
    <subcellularLocation>
        <location evidence="1">Cytoplasm</location>
    </subcellularLocation>
</comment>
<comment type="similarity">
    <text evidence="3">Belongs to the eukaryotic ribosomal protein eL29 family.</text>
</comment>
<feature type="chain" id="PRO_0000219137" description="Large ribosomal subunit protein eL29">
    <location>
        <begin position="1"/>
        <end position="160"/>
    </location>
</feature>
<feature type="region of interest" description="Disordered" evidence="2">
    <location>
        <begin position="1"/>
        <end position="32"/>
    </location>
</feature>
<feature type="region of interest" description="Disordered" evidence="2">
    <location>
        <begin position="119"/>
        <end position="160"/>
    </location>
</feature>
<feature type="compositionally biased region" description="Basic residues" evidence="2">
    <location>
        <begin position="1"/>
        <end position="26"/>
    </location>
</feature>
<feature type="compositionally biased region" description="Low complexity" evidence="2">
    <location>
        <begin position="121"/>
        <end position="141"/>
    </location>
</feature>
<feature type="modified residue" description="N6-methyllysine" evidence="1">
    <location>
        <position position="5"/>
    </location>
</feature>
<feature type="modified residue" description="Phosphoserine" evidence="1">
    <location>
        <position position="31"/>
    </location>
</feature>
<feature type="modified residue" description="N6-acetyllysine" evidence="1">
    <location>
        <position position="33"/>
    </location>
</feature>
<name>RL29_PIG</name>
<keyword id="KW-0002">3D-structure</keyword>
<keyword id="KW-0007">Acetylation</keyword>
<keyword id="KW-0963">Cytoplasm</keyword>
<keyword id="KW-0488">Methylation</keyword>
<keyword id="KW-0597">Phosphoprotein</keyword>
<keyword id="KW-1185">Reference proteome</keyword>
<keyword id="KW-0687">Ribonucleoprotein</keyword>
<keyword id="KW-0689">Ribosomal protein</keyword>
<evidence type="ECO:0000250" key="1">
    <source>
        <dbReference type="UniProtKB" id="P47914"/>
    </source>
</evidence>
<evidence type="ECO:0000256" key="2">
    <source>
        <dbReference type="SAM" id="MobiDB-lite"/>
    </source>
</evidence>
<evidence type="ECO:0000305" key="3"/>
<proteinExistence type="evidence at protein level"/>